<reference key="1">
    <citation type="journal article" date="2000" name="Nature">
        <title>DNA sequence of both chromosomes of the cholera pathogen Vibrio cholerae.</title>
        <authorList>
            <person name="Heidelberg J.F."/>
            <person name="Eisen J.A."/>
            <person name="Nelson W.C."/>
            <person name="Clayton R.A."/>
            <person name="Gwinn M.L."/>
            <person name="Dodson R.J."/>
            <person name="Haft D.H."/>
            <person name="Hickey E.K."/>
            <person name="Peterson J.D."/>
            <person name="Umayam L.A."/>
            <person name="Gill S.R."/>
            <person name="Nelson K.E."/>
            <person name="Read T.D."/>
            <person name="Tettelin H."/>
            <person name="Richardson D.L."/>
            <person name="Ermolaeva M.D."/>
            <person name="Vamathevan J.J."/>
            <person name="Bass S."/>
            <person name="Qin H."/>
            <person name="Dragoi I."/>
            <person name="Sellers P."/>
            <person name="McDonald L.A."/>
            <person name="Utterback T.R."/>
            <person name="Fleischmann R.D."/>
            <person name="Nierman W.C."/>
            <person name="White O."/>
            <person name="Salzberg S.L."/>
            <person name="Smith H.O."/>
            <person name="Colwell R.R."/>
            <person name="Mekalanos J.J."/>
            <person name="Venter J.C."/>
            <person name="Fraser C.M."/>
        </authorList>
    </citation>
    <scope>NUCLEOTIDE SEQUENCE [LARGE SCALE GENOMIC DNA]</scope>
    <source>
        <strain>ATCC 39315 / El Tor Inaba N16961</strain>
    </source>
</reference>
<sequence length="233" mass="24618">MAKLTKRMRTIRAKVDVTKEYDINEAVALLKELATAKFVESVDVAVNLGIDARKSDQNVRGATVLPHGTGRDIRVAVFTQGANAEAAKAAGAELVGMEDLADLVKKGEMNFDVVIASPDAMRVVGQLGTILGPRGLMPNPKVGTVTPNVAEAVKNAKAGQVRYRNDKNGIIHTTIGKVTFEADQLKENLEALLVALKKAKPSSAKGVFVKKVSISTTMGAGVAVDQNTLSAQV</sequence>
<name>RL1_VIBCH</name>
<organism>
    <name type="scientific">Vibrio cholerae serotype O1 (strain ATCC 39315 / El Tor Inaba N16961)</name>
    <dbReference type="NCBI Taxonomy" id="243277"/>
    <lineage>
        <taxon>Bacteria</taxon>
        <taxon>Pseudomonadati</taxon>
        <taxon>Pseudomonadota</taxon>
        <taxon>Gammaproteobacteria</taxon>
        <taxon>Vibrionales</taxon>
        <taxon>Vibrionaceae</taxon>
        <taxon>Vibrio</taxon>
    </lineage>
</organism>
<protein>
    <recommendedName>
        <fullName evidence="1">Large ribosomal subunit protein uL1</fullName>
    </recommendedName>
    <alternativeName>
        <fullName evidence="2">50S ribosomal protein L1</fullName>
    </alternativeName>
</protein>
<proteinExistence type="inferred from homology"/>
<dbReference type="EMBL" id="AE003852">
    <property type="protein sequence ID" value="AAF93498.1"/>
    <property type="molecule type" value="Genomic_DNA"/>
</dbReference>
<dbReference type="PIR" id="C82338">
    <property type="entry name" value="C82338"/>
</dbReference>
<dbReference type="RefSeq" id="NP_229979.1">
    <property type="nucleotide sequence ID" value="NC_002505.1"/>
</dbReference>
<dbReference type="RefSeq" id="WP_001096669.1">
    <property type="nucleotide sequence ID" value="NZ_LT906614.1"/>
</dbReference>
<dbReference type="SMR" id="Q9KV33"/>
<dbReference type="STRING" id="243277.VC_0325"/>
<dbReference type="EnsemblBacteria" id="AAF93498">
    <property type="protein sequence ID" value="AAF93498"/>
    <property type="gene ID" value="VC_0325"/>
</dbReference>
<dbReference type="GeneID" id="88783728"/>
<dbReference type="KEGG" id="vch:VC_0325"/>
<dbReference type="PATRIC" id="fig|243277.26.peg.302"/>
<dbReference type="eggNOG" id="COG0081">
    <property type="taxonomic scope" value="Bacteria"/>
</dbReference>
<dbReference type="HOGENOM" id="CLU_062853_0_0_6"/>
<dbReference type="Proteomes" id="UP000000584">
    <property type="component" value="Chromosome 1"/>
</dbReference>
<dbReference type="GO" id="GO:0022625">
    <property type="term" value="C:cytosolic large ribosomal subunit"/>
    <property type="evidence" value="ECO:0000318"/>
    <property type="project" value="GO_Central"/>
</dbReference>
<dbReference type="GO" id="GO:0019843">
    <property type="term" value="F:rRNA binding"/>
    <property type="evidence" value="ECO:0007669"/>
    <property type="project" value="UniProtKB-UniRule"/>
</dbReference>
<dbReference type="GO" id="GO:0003735">
    <property type="term" value="F:structural constituent of ribosome"/>
    <property type="evidence" value="ECO:0007669"/>
    <property type="project" value="InterPro"/>
</dbReference>
<dbReference type="GO" id="GO:0000049">
    <property type="term" value="F:tRNA binding"/>
    <property type="evidence" value="ECO:0007669"/>
    <property type="project" value="UniProtKB-KW"/>
</dbReference>
<dbReference type="GO" id="GO:0006417">
    <property type="term" value="P:regulation of translation"/>
    <property type="evidence" value="ECO:0007669"/>
    <property type="project" value="UniProtKB-KW"/>
</dbReference>
<dbReference type="GO" id="GO:0006412">
    <property type="term" value="P:translation"/>
    <property type="evidence" value="ECO:0007669"/>
    <property type="project" value="UniProtKB-UniRule"/>
</dbReference>
<dbReference type="CDD" id="cd00403">
    <property type="entry name" value="Ribosomal_L1"/>
    <property type="match status" value="1"/>
</dbReference>
<dbReference type="FunFam" id="3.40.50.790:FF:000001">
    <property type="entry name" value="50S ribosomal protein L1"/>
    <property type="match status" value="1"/>
</dbReference>
<dbReference type="Gene3D" id="3.30.190.20">
    <property type="match status" value="1"/>
</dbReference>
<dbReference type="Gene3D" id="3.40.50.790">
    <property type="match status" value="1"/>
</dbReference>
<dbReference type="HAMAP" id="MF_01318_B">
    <property type="entry name" value="Ribosomal_uL1_B"/>
    <property type="match status" value="1"/>
</dbReference>
<dbReference type="InterPro" id="IPR005878">
    <property type="entry name" value="Ribosom_uL1_bac-type"/>
</dbReference>
<dbReference type="InterPro" id="IPR002143">
    <property type="entry name" value="Ribosomal_uL1"/>
</dbReference>
<dbReference type="InterPro" id="IPR023674">
    <property type="entry name" value="Ribosomal_uL1-like"/>
</dbReference>
<dbReference type="InterPro" id="IPR028364">
    <property type="entry name" value="Ribosomal_uL1/biogenesis"/>
</dbReference>
<dbReference type="InterPro" id="IPR016095">
    <property type="entry name" value="Ribosomal_uL1_3-a/b-sand"/>
</dbReference>
<dbReference type="InterPro" id="IPR023673">
    <property type="entry name" value="Ribosomal_uL1_CS"/>
</dbReference>
<dbReference type="NCBIfam" id="TIGR01169">
    <property type="entry name" value="rplA_bact"/>
    <property type="match status" value="1"/>
</dbReference>
<dbReference type="PANTHER" id="PTHR36427">
    <property type="entry name" value="54S RIBOSOMAL PROTEIN L1, MITOCHONDRIAL"/>
    <property type="match status" value="1"/>
</dbReference>
<dbReference type="PANTHER" id="PTHR36427:SF3">
    <property type="entry name" value="LARGE RIBOSOMAL SUBUNIT PROTEIN UL1M"/>
    <property type="match status" value="1"/>
</dbReference>
<dbReference type="Pfam" id="PF00687">
    <property type="entry name" value="Ribosomal_L1"/>
    <property type="match status" value="1"/>
</dbReference>
<dbReference type="PIRSF" id="PIRSF002155">
    <property type="entry name" value="Ribosomal_L1"/>
    <property type="match status" value="1"/>
</dbReference>
<dbReference type="SUPFAM" id="SSF56808">
    <property type="entry name" value="Ribosomal protein L1"/>
    <property type="match status" value="1"/>
</dbReference>
<dbReference type="PROSITE" id="PS01199">
    <property type="entry name" value="RIBOSOMAL_L1"/>
    <property type="match status" value="1"/>
</dbReference>
<evidence type="ECO:0000255" key="1">
    <source>
        <dbReference type="HAMAP-Rule" id="MF_01318"/>
    </source>
</evidence>
<evidence type="ECO:0000305" key="2"/>
<keyword id="KW-1185">Reference proteome</keyword>
<keyword id="KW-0678">Repressor</keyword>
<keyword id="KW-0687">Ribonucleoprotein</keyword>
<keyword id="KW-0689">Ribosomal protein</keyword>
<keyword id="KW-0694">RNA-binding</keyword>
<keyword id="KW-0699">rRNA-binding</keyword>
<keyword id="KW-0810">Translation regulation</keyword>
<keyword id="KW-0820">tRNA-binding</keyword>
<gene>
    <name evidence="1" type="primary">rplA</name>
    <name type="ordered locus">VC_0325</name>
</gene>
<comment type="function">
    <text evidence="1">Binds directly to 23S rRNA. The L1 stalk is quite mobile in the ribosome, and is involved in E site tRNA release.</text>
</comment>
<comment type="function">
    <text evidence="1">Protein L1 is also a translational repressor protein, it controls the translation of the L11 operon by binding to its mRNA.</text>
</comment>
<comment type="subunit">
    <text evidence="1">Part of the 50S ribosomal subunit.</text>
</comment>
<comment type="similarity">
    <text evidence="1">Belongs to the universal ribosomal protein uL1 family.</text>
</comment>
<accession>Q9KV33</accession>
<feature type="chain" id="PRO_0000125772" description="Large ribosomal subunit protein uL1">
    <location>
        <begin position="1"/>
        <end position="233"/>
    </location>
</feature>